<name>MURB_LIMF3</name>
<keyword id="KW-0131">Cell cycle</keyword>
<keyword id="KW-0132">Cell division</keyword>
<keyword id="KW-0133">Cell shape</keyword>
<keyword id="KW-0961">Cell wall biogenesis/degradation</keyword>
<keyword id="KW-0963">Cytoplasm</keyword>
<keyword id="KW-0274">FAD</keyword>
<keyword id="KW-0285">Flavoprotein</keyword>
<keyword id="KW-0521">NADP</keyword>
<keyword id="KW-0560">Oxidoreductase</keyword>
<keyword id="KW-0573">Peptidoglycan synthesis</keyword>
<keyword id="KW-1185">Reference proteome</keyword>
<feature type="chain" id="PRO_1000191426" description="UDP-N-acetylenolpyruvoylglucosamine reductase">
    <location>
        <begin position="1"/>
        <end position="300"/>
    </location>
</feature>
<feature type="domain" description="FAD-binding PCMH-type" evidence="1">
    <location>
        <begin position="28"/>
        <end position="193"/>
    </location>
</feature>
<feature type="active site" evidence="1">
    <location>
        <position position="172"/>
    </location>
</feature>
<feature type="active site" description="Proton donor" evidence="1">
    <location>
        <position position="222"/>
    </location>
</feature>
<feature type="active site" evidence="1">
    <location>
        <position position="292"/>
    </location>
</feature>
<protein>
    <recommendedName>
        <fullName evidence="1">UDP-N-acetylenolpyruvoylglucosamine reductase</fullName>
        <ecNumber evidence="1">1.3.1.98</ecNumber>
    </recommendedName>
    <alternativeName>
        <fullName evidence="1">UDP-N-acetylmuramate dehydrogenase</fullName>
    </alternativeName>
</protein>
<evidence type="ECO:0000255" key="1">
    <source>
        <dbReference type="HAMAP-Rule" id="MF_00037"/>
    </source>
</evidence>
<dbReference type="EC" id="1.3.1.98" evidence="1"/>
<dbReference type="EMBL" id="AP008937">
    <property type="protein sequence ID" value="BAG26714.1"/>
    <property type="molecule type" value="Genomic_DNA"/>
</dbReference>
<dbReference type="SMR" id="B2GAN2"/>
<dbReference type="KEGG" id="lfe:LAF_0378"/>
<dbReference type="eggNOG" id="COG0812">
    <property type="taxonomic scope" value="Bacteria"/>
</dbReference>
<dbReference type="HOGENOM" id="CLU_035304_1_1_9"/>
<dbReference type="UniPathway" id="UPA00219"/>
<dbReference type="Proteomes" id="UP000001697">
    <property type="component" value="Chromosome"/>
</dbReference>
<dbReference type="GO" id="GO:0005829">
    <property type="term" value="C:cytosol"/>
    <property type="evidence" value="ECO:0007669"/>
    <property type="project" value="TreeGrafter"/>
</dbReference>
<dbReference type="GO" id="GO:0071949">
    <property type="term" value="F:FAD binding"/>
    <property type="evidence" value="ECO:0007669"/>
    <property type="project" value="InterPro"/>
</dbReference>
<dbReference type="GO" id="GO:0008762">
    <property type="term" value="F:UDP-N-acetylmuramate dehydrogenase activity"/>
    <property type="evidence" value="ECO:0007669"/>
    <property type="project" value="UniProtKB-UniRule"/>
</dbReference>
<dbReference type="GO" id="GO:0051301">
    <property type="term" value="P:cell division"/>
    <property type="evidence" value="ECO:0007669"/>
    <property type="project" value="UniProtKB-KW"/>
</dbReference>
<dbReference type="GO" id="GO:0071555">
    <property type="term" value="P:cell wall organization"/>
    <property type="evidence" value="ECO:0007669"/>
    <property type="project" value="UniProtKB-KW"/>
</dbReference>
<dbReference type="GO" id="GO:0009252">
    <property type="term" value="P:peptidoglycan biosynthetic process"/>
    <property type="evidence" value="ECO:0007669"/>
    <property type="project" value="UniProtKB-UniRule"/>
</dbReference>
<dbReference type="GO" id="GO:0008360">
    <property type="term" value="P:regulation of cell shape"/>
    <property type="evidence" value="ECO:0007669"/>
    <property type="project" value="UniProtKB-KW"/>
</dbReference>
<dbReference type="Gene3D" id="3.30.465.10">
    <property type="match status" value="1"/>
</dbReference>
<dbReference type="Gene3D" id="3.90.78.10">
    <property type="entry name" value="UDP-N-acetylenolpyruvoylglucosamine reductase, C-terminal domain"/>
    <property type="match status" value="1"/>
</dbReference>
<dbReference type="Gene3D" id="3.30.43.10">
    <property type="entry name" value="Uridine Diphospho-n-acetylenolpyruvylglucosamine Reductase, domain 2"/>
    <property type="match status" value="1"/>
</dbReference>
<dbReference type="HAMAP" id="MF_00037">
    <property type="entry name" value="MurB"/>
    <property type="match status" value="1"/>
</dbReference>
<dbReference type="InterPro" id="IPR016166">
    <property type="entry name" value="FAD-bd_PCMH"/>
</dbReference>
<dbReference type="InterPro" id="IPR036318">
    <property type="entry name" value="FAD-bd_PCMH-like_sf"/>
</dbReference>
<dbReference type="InterPro" id="IPR016167">
    <property type="entry name" value="FAD-bd_PCMH_sub1"/>
</dbReference>
<dbReference type="InterPro" id="IPR016169">
    <property type="entry name" value="FAD-bd_PCMH_sub2"/>
</dbReference>
<dbReference type="InterPro" id="IPR003170">
    <property type="entry name" value="MurB"/>
</dbReference>
<dbReference type="InterPro" id="IPR011601">
    <property type="entry name" value="MurB_C"/>
</dbReference>
<dbReference type="InterPro" id="IPR036635">
    <property type="entry name" value="MurB_C_sf"/>
</dbReference>
<dbReference type="InterPro" id="IPR006094">
    <property type="entry name" value="Oxid_FAD_bind_N"/>
</dbReference>
<dbReference type="NCBIfam" id="TIGR00179">
    <property type="entry name" value="murB"/>
    <property type="match status" value="1"/>
</dbReference>
<dbReference type="NCBIfam" id="NF010480">
    <property type="entry name" value="PRK13905.1"/>
    <property type="match status" value="1"/>
</dbReference>
<dbReference type="PANTHER" id="PTHR21071">
    <property type="entry name" value="UDP-N-ACETYLENOLPYRUVOYLGLUCOSAMINE REDUCTASE"/>
    <property type="match status" value="1"/>
</dbReference>
<dbReference type="PANTHER" id="PTHR21071:SF4">
    <property type="entry name" value="UDP-N-ACETYLENOLPYRUVOYLGLUCOSAMINE REDUCTASE"/>
    <property type="match status" value="1"/>
</dbReference>
<dbReference type="Pfam" id="PF01565">
    <property type="entry name" value="FAD_binding_4"/>
    <property type="match status" value="1"/>
</dbReference>
<dbReference type="Pfam" id="PF02873">
    <property type="entry name" value="MurB_C"/>
    <property type="match status" value="1"/>
</dbReference>
<dbReference type="SUPFAM" id="SSF56176">
    <property type="entry name" value="FAD-binding/transporter-associated domain-like"/>
    <property type="match status" value="1"/>
</dbReference>
<dbReference type="SUPFAM" id="SSF56194">
    <property type="entry name" value="Uridine diphospho-N-Acetylenolpyruvylglucosamine reductase, MurB, C-terminal domain"/>
    <property type="match status" value="1"/>
</dbReference>
<dbReference type="PROSITE" id="PS51387">
    <property type="entry name" value="FAD_PCMH"/>
    <property type="match status" value="1"/>
</dbReference>
<accession>B2GAN2</accession>
<reference key="1">
    <citation type="journal article" date="2008" name="DNA Res.">
        <title>Comparative genome analysis of Lactobacillus reuteri and Lactobacillus fermentum reveal a genomic island for reuterin and cobalamin production.</title>
        <authorList>
            <person name="Morita H."/>
            <person name="Toh H."/>
            <person name="Fukuda S."/>
            <person name="Horikawa H."/>
            <person name="Oshima K."/>
            <person name="Suzuki T."/>
            <person name="Murakami M."/>
            <person name="Hisamatsu S."/>
            <person name="Kato Y."/>
            <person name="Takizawa T."/>
            <person name="Fukuoka H."/>
            <person name="Yoshimura T."/>
            <person name="Itoh K."/>
            <person name="O'Sullivan D.J."/>
            <person name="McKay L.L."/>
            <person name="Ohno H."/>
            <person name="Kikuchi J."/>
            <person name="Masaoka T."/>
            <person name="Hattori M."/>
        </authorList>
    </citation>
    <scope>NUCLEOTIDE SEQUENCE [LARGE SCALE GENOMIC DNA]</scope>
    <source>
        <strain>NBRC 3956 / LMG 18251</strain>
    </source>
</reference>
<proteinExistence type="inferred from homology"/>
<gene>
    <name evidence="1" type="primary">murB</name>
    <name type="ordered locus">LAF_0378</name>
</gene>
<organism>
    <name type="scientific">Limosilactobacillus fermentum (strain NBRC 3956 / LMG 18251)</name>
    <name type="common">Lactobacillus fermentum</name>
    <dbReference type="NCBI Taxonomy" id="334390"/>
    <lineage>
        <taxon>Bacteria</taxon>
        <taxon>Bacillati</taxon>
        <taxon>Bacillota</taxon>
        <taxon>Bacilli</taxon>
        <taxon>Lactobacillales</taxon>
        <taxon>Lactobacillaceae</taxon>
        <taxon>Limosilactobacillus</taxon>
    </lineage>
</organism>
<comment type="function">
    <text evidence="1">Cell wall formation.</text>
</comment>
<comment type="catalytic activity">
    <reaction evidence="1">
        <text>UDP-N-acetyl-alpha-D-muramate + NADP(+) = UDP-N-acetyl-3-O-(1-carboxyvinyl)-alpha-D-glucosamine + NADPH + H(+)</text>
        <dbReference type="Rhea" id="RHEA:12248"/>
        <dbReference type="ChEBI" id="CHEBI:15378"/>
        <dbReference type="ChEBI" id="CHEBI:57783"/>
        <dbReference type="ChEBI" id="CHEBI:58349"/>
        <dbReference type="ChEBI" id="CHEBI:68483"/>
        <dbReference type="ChEBI" id="CHEBI:70757"/>
        <dbReference type="EC" id="1.3.1.98"/>
    </reaction>
</comment>
<comment type="cofactor">
    <cofactor evidence="1">
        <name>FAD</name>
        <dbReference type="ChEBI" id="CHEBI:57692"/>
    </cofactor>
</comment>
<comment type="pathway">
    <text evidence="1">Cell wall biogenesis; peptidoglycan biosynthesis.</text>
</comment>
<comment type="subcellular location">
    <subcellularLocation>
        <location evidence="1">Cytoplasm</location>
    </subcellularLocation>
</comment>
<comment type="similarity">
    <text evidence="1">Belongs to the MurB family.</text>
</comment>
<sequence length="300" mass="32205">MQMENLITTFPEIEIKEHEPLAHYTNTKTGGPADWLAFPVDVAQVQQLVDYCHQTGLALTVIGNASNLIVRDGGIEGLVMILTRMQTVKVEGTMVTAAAGASYIEVTKIARDHSLTGLEFAAGIPGSIGGAIFMNAGAYGGETKTVVDHVTVMERDGQIHQLSNEEMDFGYRHSAVQASGAIVLDATFALKLGDQNAITAQMEDLNARRAAKQPLELPSCGSVFKRPTGYFAGKLIHDAGLQGYTSGGAQVSTKHAGFIVNVNHGTATDYLNVIHHVQETVQEKFGVQLETEVRIIGRQS</sequence>